<protein>
    <recommendedName>
        <fullName evidence="1">Ribosome-binding factor A</fullName>
    </recommendedName>
</protein>
<reference key="1">
    <citation type="journal article" date="2011" name="Appl. Environ. Microbiol.">
        <title>Genomic potential of Marinobacter aquaeolei, a biogeochemical 'opportunitroph'.</title>
        <authorList>
            <person name="Singer E."/>
            <person name="Webb E.A."/>
            <person name="Nelson W.C."/>
            <person name="Heidelberg J.F."/>
            <person name="Ivanova N."/>
            <person name="Pati A."/>
            <person name="Edwards K.J."/>
        </authorList>
    </citation>
    <scope>NUCLEOTIDE SEQUENCE [LARGE SCALE GENOMIC DNA]</scope>
    <source>
        <strain>ATCC 700491 / DSM 11845 / VT8</strain>
    </source>
</reference>
<comment type="function">
    <text evidence="1">One of several proteins that assist in the late maturation steps of the functional core of the 30S ribosomal subunit. Associates with free 30S ribosomal subunits (but not with 30S subunits that are part of 70S ribosomes or polysomes). Required for efficient processing of 16S rRNA. May interact with the 5'-terminal helix region of 16S rRNA.</text>
</comment>
<comment type="subunit">
    <text evidence="1">Monomer. Binds 30S ribosomal subunits, but not 50S ribosomal subunits or 70S ribosomes.</text>
</comment>
<comment type="subcellular location">
    <subcellularLocation>
        <location evidence="1">Cytoplasm</location>
    </subcellularLocation>
</comment>
<comment type="similarity">
    <text evidence="1">Belongs to the RbfA family.</text>
</comment>
<evidence type="ECO:0000255" key="1">
    <source>
        <dbReference type="HAMAP-Rule" id="MF_00003"/>
    </source>
</evidence>
<evidence type="ECO:0000256" key="2">
    <source>
        <dbReference type="SAM" id="MobiDB-lite"/>
    </source>
</evidence>
<feature type="chain" id="PRO_1000000137" description="Ribosome-binding factor A">
    <location>
        <begin position="1"/>
        <end position="143"/>
    </location>
</feature>
<feature type="region of interest" description="Disordered" evidence="2">
    <location>
        <begin position="119"/>
        <end position="143"/>
    </location>
</feature>
<feature type="compositionally biased region" description="Basic and acidic residues" evidence="2">
    <location>
        <begin position="119"/>
        <end position="129"/>
    </location>
</feature>
<gene>
    <name evidence="1" type="primary">rbfA</name>
    <name type="ordered locus">Maqu_3347</name>
</gene>
<name>RBFA_MARN8</name>
<proteinExistence type="inferred from homology"/>
<accession>A1U5Z9</accession>
<dbReference type="EMBL" id="CP000514">
    <property type="protein sequence ID" value="ABM20418.1"/>
    <property type="molecule type" value="Genomic_DNA"/>
</dbReference>
<dbReference type="RefSeq" id="WP_011786759.1">
    <property type="nucleotide sequence ID" value="NC_008740.1"/>
</dbReference>
<dbReference type="SMR" id="A1U5Z9"/>
<dbReference type="STRING" id="351348.Maqu_3347"/>
<dbReference type="GeneID" id="31822552"/>
<dbReference type="KEGG" id="maq:Maqu_3347"/>
<dbReference type="eggNOG" id="COG0858">
    <property type="taxonomic scope" value="Bacteria"/>
</dbReference>
<dbReference type="HOGENOM" id="CLU_089475_5_0_6"/>
<dbReference type="OrthoDB" id="307788at2"/>
<dbReference type="Proteomes" id="UP000000998">
    <property type="component" value="Chromosome"/>
</dbReference>
<dbReference type="GO" id="GO:0005829">
    <property type="term" value="C:cytosol"/>
    <property type="evidence" value="ECO:0007669"/>
    <property type="project" value="TreeGrafter"/>
</dbReference>
<dbReference type="GO" id="GO:0043024">
    <property type="term" value="F:ribosomal small subunit binding"/>
    <property type="evidence" value="ECO:0007669"/>
    <property type="project" value="TreeGrafter"/>
</dbReference>
<dbReference type="GO" id="GO:0030490">
    <property type="term" value="P:maturation of SSU-rRNA"/>
    <property type="evidence" value="ECO:0007669"/>
    <property type="project" value="UniProtKB-UniRule"/>
</dbReference>
<dbReference type="Gene3D" id="3.30.300.20">
    <property type="match status" value="1"/>
</dbReference>
<dbReference type="HAMAP" id="MF_00003">
    <property type="entry name" value="RbfA"/>
    <property type="match status" value="1"/>
</dbReference>
<dbReference type="InterPro" id="IPR015946">
    <property type="entry name" value="KH_dom-like_a/b"/>
</dbReference>
<dbReference type="InterPro" id="IPR000238">
    <property type="entry name" value="RbfA"/>
</dbReference>
<dbReference type="InterPro" id="IPR023799">
    <property type="entry name" value="RbfA_dom_sf"/>
</dbReference>
<dbReference type="InterPro" id="IPR020053">
    <property type="entry name" value="Ribosome-bd_factorA_CS"/>
</dbReference>
<dbReference type="NCBIfam" id="TIGR00082">
    <property type="entry name" value="rbfA"/>
    <property type="match status" value="1"/>
</dbReference>
<dbReference type="PANTHER" id="PTHR33515">
    <property type="entry name" value="RIBOSOME-BINDING FACTOR A, CHLOROPLASTIC-RELATED"/>
    <property type="match status" value="1"/>
</dbReference>
<dbReference type="PANTHER" id="PTHR33515:SF1">
    <property type="entry name" value="RIBOSOME-BINDING FACTOR A, CHLOROPLASTIC-RELATED"/>
    <property type="match status" value="1"/>
</dbReference>
<dbReference type="Pfam" id="PF02033">
    <property type="entry name" value="RBFA"/>
    <property type="match status" value="1"/>
</dbReference>
<dbReference type="SUPFAM" id="SSF89919">
    <property type="entry name" value="Ribosome-binding factor A, RbfA"/>
    <property type="match status" value="1"/>
</dbReference>
<dbReference type="PROSITE" id="PS01319">
    <property type="entry name" value="RBFA"/>
    <property type="match status" value="1"/>
</dbReference>
<keyword id="KW-0963">Cytoplasm</keyword>
<keyword id="KW-0690">Ribosome biogenesis</keyword>
<sequence>MAREYSRVDRIGDQMQRELAQLIQREVKDPRVGMVTVNDVKVSRDLGYADIYISLLSTEELTEDSPEVQDSLTVLNKASGFLRGQVGRAMKLRVVPHLRFHFDKLLGQSRKMDRLIREAVGDKPAVPRDDNDDPVSDNPERDA</sequence>
<organism>
    <name type="scientific">Marinobacter nauticus (strain ATCC 700491 / DSM 11845 / VT8)</name>
    <name type="common">Marinobacter aquaeolei</name>
    <dbReference type="NCBI Taxonomy" id="351348"/>
    <lineage>
        <taxon>Bacteria</taxon>
        <taxon>Pseudomonadati</taxon>
        <taxon>Pseudomonadota</taxon>
        <taxon>Gammaproteobacteria</taxon>
        <taxon>Pseudomonadales</taxon>
        <taxon>Marinobacteraceae</taxon>
        <taxon>Marinobacter</taxon>
    </lineage>
</organism>